<accession>Q815S0</accession>
<feature type="chain" id="PRO_0000234672" description="Tyrosine--tRNA ligase 2">
    <location>
        <begin position="1"/>
        <end position="420"/>
    </location>
</feature>
<feature type="domain" description="S4 RNA-binding" evidence="1">
    <location>
        <begin position="352"/>
        <end position="418"/>
    </location>
</feature>
<feature type="short sequence motif" description="'HIGH' region">
    <location>
        <begin position="39"/>
        <end position="48"/>
    </location>
</feature>
<feature type="short sequence motif" description="'KMSKS' region">
    <location>
        <begin position="230"/>
        <end position="234"/>
    </location>
</feature>
<feature type="binding site" evidence="1">
    <location>
        <position position="34"/>
    </location>
    <ligand>
        <name>L-tyrosine</name>
        <dbReference type="ChEBI" id="CHEBI:58315"/>
    </ligand>
</feature>
<feature type="binding site" evidence="1">
    <location>
        <position position="168"/>
    </location>
    <ligand>
        <name>L-tyrosine</name>
        <dbReference type="ChEBI" id="CHEBI:58315"/>
    </ligand>
</feature>
<feature type="binding site" evidence="1">
    <location>
        <position position="172"/>
    </location>
    <ligand>
        <name>L-tyrosine</name>
        <dbReference type="ChEBI" id="CHEBI:58315"/>
    </ligand>
</feature>
<feature type="binding site" evidence="1">
    <location>
        <position position="233"/>
    </location>
    <ligand>
        <name>ATP</name>
        <dbReference type="ChEBI" id="CHEBI:30616"/>
    </ligand>
</feature>
<proteinExistence type="inferred from homology"/>
<reference key="1">
    <citation type="journal article" date="2003" name="Nature">
        <title>Genome sequence of Bacillus cereus and comparative analysis with Bacillus anthracis.</title>
        <authorList>
            <person name="Ivanova N."/>
            <person name="Sorokin A."/>
            <person name="Anderson I."/>
            <person name="Galleron N."/>
            <person name="Candelon B."/>
            <person name="Kapatral V."/>
            <person name="Bhattacharyya A."/>
            <person name="Reznik G."/>
            <person name="Mikhailova N."/>
            <person name="Lapidus A."/>
            <person name="Chu L."/>
            <person name="Mazur M."/>
            <person name="Goltsman E."/>
            <person name="Larsen N."/>
            <person name="D'Souza M."/>
            <person name="Walunas T."/>
            <person name="Grechkin Y."/>
            <person name="Pusch G."/>
            <person name="Haselkorn R."/>
            <person name="Fonstein M."/>
            <person name="Ehrlich S.D."/>
            <person name="Overbeek R."/>
            <person name="Kyrpides N.C."/>
        </authorList>
    </citation>
    <scope>NUCLEOTIDE SEQUENCE [LARGE SCALE GENOMIC DNA]</scope>
    <source>
        <strain>ATCC 14579 / DSM 31 / CCUG 7414 / JCM 2152 / NBRC 15305 / NCIMB 9373 / NCTC 2599 / NRRL B-3711</strain>
    </source>
</reference>
<keyword id="KW-0030">Aminoacyl-tRNA synthetase</keyword>
<keyword id="KW-0067">ATP-binding</keyword>
<keyword id="KW-0963">Cytoplasm</keyword>
<keyword id="KW-0436">Ligase</keyword>
<keyword id="KW-0547">Nucleotide-binding</keyword>
<keyword id="KW-0648">Protein biosynthesis</keyword>
<keyword id="KW-1185">Reference proteome</keyword>
<keyword id="KW-0694">RNA-binding</keyword>
<protein>
    <recommendedName>
        <fullName evidence="1">Tyrosine--tRNA ligase 2</fullName>
        <ecNumber evidence="1">6.1.1.1</ecNumber>
    </recommendedName>
    <alternativeName>
        <fullName evidence="1">Tyrosyl-tRNA synthetase 2</fullName>
        <shortName evidence="1">TyrRS 2</shortName>
    </alternativeName>
</protein>
<gene>
    <name evidence="1" type="primary">tyrS2</name>
    <name type="ordered locus">BC_5062</name>
</gene>
<comment type="function">
    <text evidence="1">Catalyzes the attachment of tyrosine to tRNA(Tyr) in a two-step reaction: tyrosine is first activated by ATP to form Tyr-AMP and then transferred to the acceptor end of tRNA(Tyr).</text>
</comment>
<comment type="catalytic activity">
    <reaction evidence="1">
        <text>tRNA(Tyr) + L-tyrosine + ATP = L-tyrosyl-tRNA(Tyr) + AMP + diphosphate + H(+)</text>
        <dbReference type="Rhea" id="RHEA:10220"/>
        <dbReference type="Rhea" id="RHEA-COMP:9706"/>
        <dbReference type="Rhea" id="RHEA-COMP:9707"/>
        <dbReference type="ChEBI" id="CHEBI:15378"/>
        <dbReference type="ChEBI" id="CHEBI:30616"/>
        <dbReference type="ChEBI" id="CHEBI:33019"/>
        <dbReference type="ChEBI" id="CHEBI:58315"/>
        <dbReference type="ChEBI" id="CHEBI:78442"/>
        <dbReference type="ChEBI" id="CHEBI:78536"/>
        <dbReference type="ChEBI" id="CHEBI:456215"/>
        <dbReference type="EC" id="6.1.1.1"/>
    </reaction>
</comment>
<comment type="subunit">
    <text evidence="1">Homodimer.</text>
</comment>
<comment type="subcellular location">
    <subcellularLocation>
        <location evidence="1">Cytoplasm</location>
    </subcellularLocation>
</comment>
<comment type="similarity">
    <text evidence="1">Belongs to the class-I aminoacyl-tRNA synthetase family. TyrS type 1 subfamily.</text>
</comment>
<name>SYY2_BACCR</name>
<sequence>MNIIDELEWRGAVNQQTDEEGLRKLVEEKKISLYCGVDPTGDSMHIGHLIPFMMMKRFQLAGHHPVILIGGATGTIGDPSGRQSERQLQTLEVVQHNVDALTAQMKKLFDFGGNSEVKMVNNYDWTHEINIIEFLRDYGKNFSINSMLAKDIVASRLDTGISFTEFTYQILQAMDFHHLYTKEDVQLQIGGSDQWGNITSGLDLIRKLEGHEAKVFGLTIPLLLKSDGTKFGKSAGGAVWLDPEKTTPFEFYQFWVNTDDRDVIKYLKYFTFLTKERIDELATKVEVEPHKREAQKVLAEEMTKFVHGEEAFLQAEKITAALFSGDIKSLTADEIEQGFKEMPTFQSSKETKNIVEWLVDLGIEPSRRQAREDINNGAISMNGEKVTDVGTDVTVENSFDGRFIIIRKGKKNYSLVKLGE</sequence>
<evidence type="ECO:0000255" key="1">
    <source>
        <dbReference type="HAMAP-Rule" id="MF_02006"/>
    </source>
</evidence>
<organism>
    <name type="scientific">Bacillus cereus (strain ATCC 14579 / DSM 31 / CCUG 7414 / JCM 2152 / NBRC 15305 / NCIMB 9373 / NCTC 2599 / NRRL B-3711)</name>
    <dbReference type="NCBI Taxonomy" id="226900"/>
    <lineage>
        <taxon>Bacteria</taxon>
        <taxon>Bacillati</taxon>
        <taxon>Bacillota</taxon>
        <taxon>Bacilli</taxon>
        <taxon>Bacillales</taxon>
        <taxon>Bacillaceae</taxon>
        <taxon>Bacillus</taxon>
        <taxon>Bacillus cereus group</taxon>
    </lineage>
</organism>
<dbReference type="EC" id="6.1.1.1" evidence="1"/>
<dbReference type="EMBL" id="AE016877">
    <property type="protein sequence ID" value="AAP11931.1"/>
    <property type="molecule type" value="Genomic_DNA"/>
</dbReference>
<dbReference type="RefSeq" id="NP_834730.1">
    <property type="nucleotide sequence ID" value="NC_004722.1"/>
</dbReference>
<dbReference type="RefSeq" id="WP_001021100.1">
    <property type="nucleotide sequence ID" value="NC_004722.1"/>
</dbReference>
<dbReference type="SMR" id="Q815S0"/>
<dbReference type="STRING" id="226900.BC_5062"/>
<dbReference type="KEGG" id="bce:BC5062"/>
<dbReference type="PATRIC" id="fig|226900.8.peg.5221"/>
<dbReference type="HOGENOM" id="CLU_024003_0_3_9"/>
<dbReference type="OrthoDB" id="9804243at2"/>
<dbReference type="Proteomes" id="UP000001417">
    <property type="component" value="Chromosome"/>
</dbReference>
<dbReference type="GO" id="GO:0005829">
    <property type="term" value="C:cytosol"/>
    <property type="evidence" value="ECO:0000318"/>
    <property type="project" value="GO_Central"/>
</dbReference>
<dbReference type="GO" id="GO:0005524">
    <property type="term" value="F:ATP binding"/>
    <property type="evidence" value="ECO:0007669"/>
    <property type="project" value="UniProtKB-UniRule"/>
</dbReference>
<dbReference type="GO" id="GO:0003723">
    <property type="term" value="F:RNA binding"/>
    <property type="evidence" value="ECO:0007669"/>
    <property type="project" value="UniProtKB-KW"/>
</dbReference>
<dbReference type="GO" id="GO:0004831">
    <property type="term" value="F:tyrosine-tRNA ligase activity"/>
    <property type="evidence" value="ECO:0000318"/>
    <property type="project" value="GO_Central"/>
</dbReference>
<dbReference type="GO" id="GO:0043039">
    <property type="term" value="P:tRNA aminoacylation"/>
    <property type="evidence" value="ECO:0000318"/>
    <property type="project" value="GO_Central"/>
</dbReference>
<dbReference type="GO" id="GO:0006437">
    <property type="term" value="P:tyrosyl-tRNA aminoacylation"/>
    <property type="evidence" value="ECO:0007669"/>
    <property type="project" value="UniProtKB-UniRule"/>
</dbReference>
<dbReference type="CDD" id="cd00165">
    <property type="entry name" value="S4"/>
    <property type="match status" value="1"/>
</dbReference>
<dbReference type="CDD" id="cd00805">
    <property type="entry name" value="TyrRS_core"/>
    <property type="match status" value="1"/>
</dbReference>
<dbReference type="FunFam" id="1.10.240.10:FF:000001">
    <property type="entry name" value="Tyrosine--tRNA ligase"/>
    <property type="match status" value="1"/>
</dbReference>
<dbReference type="FunFam" id="3.40.50.620:FF:000008">
    <property type="entry name" value="Tyrosine--tRNA ligase"/>
    <property type="match status" value="1"/>
</dbReference>
<dbReference type="Gene3D" id="3.40.50.620">
    <property type="entry name" value="HUPs"/>
    <property type="match status" value="1"/>
</dbReference>
<dbReference type="Gene3D" id="3.10.290.10">
    <property type="entry name" value="RNA-binding S4 domain"/>
    <property type="match status" value="1"/>
</dbReference>
<dbReference type="Gene3D" id="1.10.240.10">
    <property type="entry name" value="Tyrosyl-Transfer RNA Synthetase"/>
    <property type="match status" value="1"/>
</dbReference>
<dbReference type="HAMAP" id="MF_02006">
    <property type="entry name" value="Tyr_tRNA_synth_type1"/>
    <property type="match status" value="1"/>
</dbReference>
<dbReference type="InterPro" id="IPR001412">
    <property type="entry name" value="aa-tRNA-synth_I_CS"/>
</dbReference>
<dbReference type="InterPro" id="IPR002305">
    <property type="entry name" value="aa-tRNA-synth_Ic"/>
</dbReference>
<dbReference type="InterPro" id="IPR014729">
    <property type="entry name" value="Rossmann-like_a/b/a_fold"/>
</dbReference>
<dbReference type="InterPro" id="IPR002942">
    <property type="entry name" value="S4_RNA-bd"/>
</dbReference>
<dbReference type="InterPro" id="IPR036986">
    <property type="entry name" value="S4_RNA-bd_sf"/>
</dbReference>
<dbReference type="InterPro" id="IPR054608">
    <property type="entry name" value="SYY-like_C"/>
</dbReference>
<dbReference type="InterPro" id="IPR002307">
    <property type="entry name" value="Tyr-tRNA-ligase"/>
</dbReference>
<dbReference type="InterPro" id="IPR024088">
    <property type="entry name" value="Tyr-tRNA-ligase_bac-type"/>
</dbReference>
<dbReference type="InterPro" id="IPR024107">
    <property type="entry name" value="Tyr-tRNA-ligase_bac_1"/>
</dbReference>
<dbReference type="NCBIfam" id="TIGR00234">
    <property type="entry name" value="tyrS"/>
    <property type="match status" value="1"/>
</dbReference>
<dbReference type="PANTHER" id="PTHR11766:SF0">
    <property type="entry name" value="TYROSINE--TRNA LIGASE, MITOCHONDRIAL"/>
    <property type="match status" value="1"/>
</dbReference>
<dbReference type="PANTHER" id="PTHR11766">
    <property type="entry name" value="TYROSYL-TRNA SYNTHETASE"/>
    <property type="match status" value="1"/>
</dbReference>
<dbReference type="Pfam" id="PF22421">
    <property type="entry name" value="SYY_C-terminal"/>
    <property type="match status" value="1"/>
</dbReference>
<dbReference type="Pfam" id="PF00579">
    <property type="entry name" value="tRNA-synt_1b"/>
    <property type="match status" value="1"/>
</dbReference>
<dbReference type="PRINTS" id="PR01040">
    <property type="entry name" value="TRNASYNTHTYR"/>
</dbReference>
<dbReference type="SMART" id="SM00363">
    <property type="entry name" value="S4"/>
    <property type="match status" value="1"/>
</dbReference>
<dbReference type="SUPFAM" id="SSF55174">
    <property type="entry name" value="Alpha-L RNA-binding motif"/>
    <property type="match status" value="1"/>
</dbReference>
<dbReference type="SUPFAM" id="SSF52374">
    <property type="entry name" value="Nucleotidylyl transferase"/>
    <property type="match status" value="1"/>
</dbReference>
<dbReference type="PROSITE" id="PS00178">
    <property type="entry name" value="AA_TRNA_LIGASE_I"/>
    <property type="match status" value="1"/>
</dbReference>
<dbReference type="PROSITE" id="PS50889">
    <property type="entry name" value="S4"/>
    <property type="match status" value="1"/>
</dbReference>